<evidence type="ECO:0000250" key="1">
    <source>
        <dbReference type="UniProtKB" id="P0DTC9"/>
    </source>
</evidence>
<evidence type="ECO:0000255" key="2">
    <source>
        <dbReference type="HAMAP-Rule" id="MF_04096"/>
    </source>
</evidence>
<evidence type="ECO:0000255" key="3">
    <source>
        <dbReference type="PROSITE-ProRule" id="PRU01276"/>
    </source>
</evidence>
<evidence type="ECO:0000255" key="4">
    <source>
        <dbReference type="PROSITE-ProRule" id="PRU01277"/>
    </source>
</evidence>
<evidence type="ECO:0000256" key="5">
    <source>
        <dbReference type="SAM" id="MobiDB-lite"/>
    </source>
</evidence>
<keyword id="KW-0013">ADP-ribosylation</keyword>
<keyword id="KW-1040">Host Golgi apparatus</keyword>
<keyword id="KW-0597">Phosphoprotein</keyword>
<keyword id="KW-1185">Reference proteome</keyword>
<keyword id="KW-0687">Ribonucleoprotein</keyword>
<keyword id="KW-0694">RNA-binding</keyword>
<keyword id="KW-0804">Transcription</keyword>
<keyword id="KW-0805">Transcription regulation</keyword>
<keyword id="KW-0543">Viral nucleoprotein</keyword>
<keyword id="KW-0946">Virion</keyword>
<name>NCAP_CVHN5</name>
<proteinExistence type="inferred from homology"/>
<feature type="chain" id="PRO_0000297769" description="Nucleoprotein">
    <location>
        <begin position="1"/>
        <end position="441"/>
    </location>
</feature>
<feature type="domain" description="CoV N NTD" evidence="3">
    <location>
        <begin position="60"/>
        <end position="189"/>
    </location>
</feature>
<feature type="domain" description="CoV N CTD" evidence="4">
    <location>
        <begin position="257"/>
        <end position="379"/>
    </location>
</feature>
<feature type="region of interest" description="Disordered" evidence="5">
    <location>
        <begin position="1"/>
        <end position="56"/>
    </location>
</feature>
<feature type="region of interest" description="RNA-binding" evidence="2">
    <location>
        <begin position="53"/>
        <end position="193"/>
    </location>
</feature>
<feature type="region of interest" description="Disordered" evidence="5">
    <location>
        <begin position="186"/>
        <end position="226"/>
    </location>
</feature>
<feature type="region of interest" description="Dimerization" evidence="2">
    <location>
        <begin position="264"/>
        <end position="382"/>
    </location>
</feature>
<feature type="region of interest" description="Disordered" evidence="5">
    <location>
        <begin position="380"/>
        <end position="408"/>
    </location>
</feature>
<feature type="compositionally biased region" description="Low complexity" evidence="5">
    <location>
        <begin position="11"/>
        <end position="20"/>
    </location>
</feature>
<feature type="compositionally biased region" description="Low complexity" evidence="5">
    <location>
        <begin position="189"/>
        <end position="220"/>
    </location>
</feature>
<feature type="compositionally biased region" description="Polar residues" evidence="5">
    <location>
        <begin position="380"/>
        <end position="389"/>
    </location>
</feature>
<feature type="binding site" evidence="1">
    <location>
        <position position="105"/>
    </location>
    <ligand>
        <name>RNA</name>
        <dbReference type="ChEBI" id="CHEBI:33697"/>
    </ligand>
</feature>
<feature type="binding site" evidence="1">
    <location>
        <position position="121"/>
    </location>
    <ligand>
        <name>RNA</name>
        <dbReference type="ChEBI" id="CHEBI:33697"/>
    </ligand>
</feature>
<feature type="binding site" evidence="1">
    <location>
        <position position="163"/>
    </location>
    <ligand>
        <name>RNA</name>
        <dbReference type="ChEBI" id="CHEBI:33697"/>
    </ligand>
</feature>
<feature type="modified residue" description="Phosphoserine; by host" evidence="2">
    <location>
        <position position="158"/>
    </location>
</feature>
<feature type="modified residue" description="Phosphothreonine; by host" evidence="2">
    <location>
        <position position="173"/>
    </location>
</feature>
<feature type="modified residue" description="Phosphoserine; by host" evidence="2">
    <location>
        <position position="190"/>
    </location>
</feature>
<feature type="modified residue" description="Phosphoserine; by host" evidence="2">
    <location>
        <position position="388"/>
    </location>
</feature>
<feature type="modified residue" description="Phosphoserine; by host" evidence="2">
    <location>
        <position position="417"/>
    </location>
</feature>
<feature type="modified residue" description="Phosphothreonine; by host" evidence="2">
    <location>
        <position position="421"/>
    </location>
</feature>
<comment type="function">
    <text evidence="2">Packages the positive strand viral genome RNA into a helical ribonucleocapsid (RNP) and plays a fundamental role during virion assembly through its interactions with the viral genome and membrane protein M. Plays an important role in enhancing the efficiency of subgenomic viral RNA transcription as well as viral replication.</text>
</comment>
<comment type="subunit">
    <text evidence="2">Homooligomer. Both monomeric and oligomeric forms interact with RNA. Interacts with protein M. Interacts with NSP3; this interaction serves to tether the genome to the newly translated replicase-transcriptase complex at a very early stage of infection.</text>
</comment>
<comment type="subcellular location">
    <subcellularLocation>
        <location evidence="2">Virion</location>
    </subcellularLocation>
    <subcellularLocation>
        <location evidence="2">Host endoplasmic reticulum-Golgi intermediate compartment</location>
    </subcellularLocation>
    <subcellularLocation>
        <location evidence="2">Host Golgi apparatus</location>
    </subcellularLocation>
    <text evidence="2">Located inside the virion, complexed with the viral RNA. Probably associates with ER-derived membranes where it participates in viral RNA synthesis and virus budding.</text>
</comment>
<comment type="PTM">
    <text evidence="2">ADP-ribosylated. The ADP-ribosylation is retained in the virion during infection.</text>
</comment>
<comment type="PTM">
    <text evidence="2">Phosphorylated on serine and threonine residues.</text>
</comment>
<comment type="similarity">
    <text evidence="2">Belongs to the betacoronavirus nucleocapsid protein family.</text>
</comment>
<organism>
    <name type="scientific">Human coronavirus HKU1 (isolate N5)</name>
    <name type="common">HCoV-HKU1</name>
    <dbReference type="NCBI Taxonomy" id="443241"/>
    <lineage>
        <taxon>Viruses</taxon>
        <taxon>Riboviria</taxon>
        <taxon>Orthornavirae</taxon>
        <taxon>Pisuviricota</taxon>
        <taxon>Pisoniviricetes</taxon>
        <taxon>Nidovirales</taxon>
        <taxon>Cornidovirineae</taxon>
        <taxon>Coronaviridae</taxon>
        <taxon>Orthocoronavirinae</taxon>
        <taxon>Betacoronavirus</taxon>
        <taxon>Embecovirus</taxon>
        <taxon>Human coronavirus HKU1</taxon>
    </lineage>
</organism>
<sequence length="441" mass="49146">MSYTPGHHAGSRSSSGNRSGILKKTSWVDQSERSHQTYNRGRKPQPKFTVSTQPQGNPIPHYSWFSGITQFQKGRDFKFPDGQGVPIAYGIPPSEAKGYWYKHNRRSFKTADGQQKQLLPRWYFYYLGTGPYASSSYGDAHEGIFWVASHQADTSIPSDVSARDPTIQEAIPTRFSPGTILPQGYYVEGSGRSASNSRPGSRSQSRGPNNRSLSRSNSNFRHSDSIVKPDMADEIASLVLAKLGKDSKPQQVTKQNAKEIRHKILMKPRQKRTPNKFCNVQQCFGKRGPLQNFGNSEMLKLGTNDPQFPILAELAPTPGAFFFGSKLELFKRDSDADSPSKDTFELRYSGSIRFDSTLPGFETIMKVLKENLDAYVNSNQNTVSGSLSPKPQRKRGVKQSPESFDSLNLSADTQHISNDFTPEDHSLLATLDDPYVEDSVA</sequence>
<gene>
    <name evidence="2" type="primary">N</name>
    <name type="ORF">7a</name>
</gene>
<organismHost>
    <name type="scientific">Homo sapiens</name>
    <name type="common">Human</name>
    <dbReference type="NCBI Taxonomy" id="9606"/>
</organismHost>
<reference key="1">
    <citation type="journal article" date="2006" name="J. Virol.">
        <title>Comparative analysis of 22 coronavirus HKU1 genomes reveals a novel genotype and evidence of natural recombination in coronavirus HKU1.</title>
        <authorList>
            <person name="Woo P.C.Y."/>
            <person name="Lau S.K.P."/>
            <person name="Yip C.C.Y."/>
            <person name="Huang Y."/>
            <person name="Tsoi H.-W."/>
            <person name="Chan K.-H."/>
            <person name="Yuen K.-Y."/>
        </authorList>
    </citation>
    <scope>NUCLEOTIDE SEQUENCE [GENOMIC RNA]</scope>
</reference>
<dbReference type="EMBL" id="DQ339101">
    <property type="protein sequence ID" value="ABC70723.1"/>
    <property type="molecule type" value="Genomic_RNA"/>
</dbReference>
<dbReference type="SMR" id="Q0ZME3"/>
<dbReference type="IntAct" id="Q0ZME3">
    <property type="interactions" value="226"/>
</dbReference>
<dbReference type="Proteomes" id="UP000001985">
    <property type="component" value="Genome"/>
</dbReference>
<dbReference type="GO" id="GO:0044172">
    <property type="term" value="C:host cell endoplasmic reticulum-Golgi intermediate compartment"/>
    <property type="evidence" value="ECO:0007669"/>
    <property type="project" value="UniProtKB-SubCell"/>
</dbReference>
<dbReference type="GO" id="GO:0044177">
    <property type="term" value="C:host cell Golgi apparatus"/>
    <property type="evidence" value="ECO:0007669"/>
    <property type="project" value="UniProtKB-SubCell"/>
</dbReference>
<dbReference type="GO" id="GO:1990904">
    <property type="term" value="C:ribonucleoprotein complex"/>
    <property type="evidence" value="ECO:0007669"/>
    <property type="project" value="UniProtKB-KW"/>
</dbReference>
<dbReference type="GO" id="GO:0019013">
    <property type="term" value="C:viral nucleocapsid"/>
    <property type="evidence" value="ECO:0007669"/>
    <property type="project" value="UniProtKB-UniRule"/>
</dbReference>
<dbReference type="GO" id="GO:0003723">
    <property type="term" value="F:RNA binding"/>
    <property type="evidence" value="ECO:0007669"/>
    <property type="project" value="UniProtKB-UniRule"/>
</dbReference>
<dbReference type="CDD" id="cd21595">
    <property type="entry name" value="CoV_N-CTD"/>
    <property type="match status" value="1"/>
</dbReference>
<dbReference type="CDD" id="cd21554">
    <property type="entry name" value="CoV_N-NTD"/>
    <property type="match status" value="1"/>
</dbReference>
<dbReference type="HAMAP" id="MF_04096">
    <property type="entry name" value="BETA_CORONA_NCAP"/>
    <property type="match status" value="1"/>
</dbReference>
<dbReference type="InterPro" id="IPR044344">
    <property type="entry name" value="N_prot_C_CoV"/>
</dbReference>
<dbReference type="InterPro" id="IPR044345">
    <property type="entry name" value="N_prot_N_CoV"/>
</dbReference>
<dbReference type="InterPro" id="IPR043505">
    <property type="entry name" value="NCAP_bCoV"/>
</dbReference>
<dbReference type="InterPro" id="IPR001218">
    <property type="entry name" value="Nucleocap_CoV"/>
</dbReference>
<dbReference type="InterPro" id="IPR037179">
    <property type="entry name" value="Nucleocapsid_C"/>
</dbReference>
<dbReference type="InterPro" id="IPR037195">
    <property type="entry name" value="Nucleocapsid_N"/>
</dbReference>
<dbReference type="Pfam" id="PF00937">
    <property type="entry name" value="CoV_nucleocap"/>
    <property type="match status" value="1"/>
</dbReference>
<dbReference type="PIRSF" id="PIRSF003888">
    <property type="entry name" value="Corona_nucleocap"/>
    <property type="match status" value="1"/>
</dbReference>
<dbReference type="SUPFAM" id="SSF110304">
    <property type="entry name" value="Coronavirus RNA-binding domain"/>
    <property type="match status" value="1"/>
</dbReference>
<dbReference type="SUPFAM" id="SSF103068">
    <property type="entry name" value="Nucleocapsid protein dimerization domain"/>
    <property type="match status" value="1"/>
</dbReference>
<dbReference type="PROSITE" id="PS51929">
    <property type="entry name" value="COV_N_CTD"/>
    <property type="match status" value="1"/>
</dbReference>
<dbReference type="PROSITE" id="PS51928">
    <property type="entry name" value="COV_N_NTD"/>
    <property type="match status" value="1"/>
</dbReference>
<accession>Q0ZME3</accession>
<protein>
    <recommendedName>
        <fullName evidence="2">Nucleoprotein</fullName>
    </recommendedName>
    <alternativeName>
        <fullName evidence="2">Nucleocapsid protein</fullName>
        <shortName evidence="2">NC</shortName>
        <shortName evidence="2">Protein N</shortName>
    </alternativeName>
</protein>